<feature type="chain" id="PRO_1000199195" description="Leucine--tRNA ligase">
    <location>
        <begin position="1"/>
        <end position="863"/>
    </location>
</feature>
<feature type="short sequence motif" description="'HIGH' region">
    <location>
        <begin position="42"/>
        <end position="52"/>
    </location>
</feature>
<feature type="short sequence motif" description="'KMSKS' region">
    <location>
        <begin position="618"/>
        <end position="622"/>
    </location>
</feature>
<feature type="binding site" evidence="1">
    <location>
        <position position="621"/>
    </location>
    <ligand>
        <name>ATP</name>
        <dbReference type="ChEBI" id="CHEBI:30616"/>
    </ligand>
</feature>
<name>SYL_DESAL</name>
<comment type="catalytic activity">
    <reaction evidence="1">
        <text>tRNA(Leu) + L-leucine + ATP = L-leucyl-tRNA(Leu) + AMP + diphosphate</text>
        <dbReference type="Rhea" id="RHEA:11688"/>
        <dbReference type="Rhea" id="RHEA-COMP:9613"/>
        <dbReference type="Rhea" id="RHEA-COMP:9622"/>
        <dbReference type="ChEBI" id="CHEBI:30616"/>
        <dbReference type="ChEBI" id="CHEBI:33019"/>
        <dbReference type="ChEBI" id="CHEBI:57427"/>
        <dbReference type="ChEBI" id="CHEBI:78442"/>
        <dbReference type="ChEBI" id="CHEBI:78494"/>
        <dbReference type="ChEBI" id="CHEBI:456215"/>
        <dbReference type="EC" id="6.1.1.4"/>
    </reaction>
</comment>
<comment type="subcellular location">
    <subcellularLocation>
        <location evidence="1">Cytoplasm</location>
    </subcellularLocation>
</comment>
<comment type="similarity">
    <text evidence="1">Belongs to the class-I aminoacyl-tRNA synthetase family.</text>
</comment>
<accession>B8F9F0</accession>
<gene>
    <name evidence="1" type="primary">leuS</name>
    <name type="ordered locus">Dalk_1193</name>
</gene>
<dbReference type="EC" id="6.1.1.4" evidence="1"/>
<dbReference type="EMBL" id="CP001322">
    <property type="protein sequence ID" value="ACL02896.1"/>
    <property type="molecule type" value="Genomic_DNA"/>
</dbReference>
<dbReference type="RefSeq" id="WP_012610332.1">
    <property type="nucleotide sequence ID" value="NC_011768.1"/>
</dbReference>
<dbReference type="SMR" id="B8F9F0"/>
<dbReference type="KEGG" id="dal:Dalk_1193"/>
<dbReference type="eggNOG" id="COG0495">
    <property type="taxonomic scope" value="Bacteria"/>
</dbReference>
<dbReference type="HOGENOM" id="CLU_004427_0_0_7"/>
<dbReference type="Proteomes" id="UP000000739">
    <property type="component" value="Chromosome"/>
</dbReference>
<dbReference type="GO" id="GO:0005829">
    <property type="term" value="C:cytosol"/>
    <property type="evidence" value="ECO:0007669"/>
    <property type="project" value="TreeGrafter"/>
</dbReference>
<dbReference type="GO" id="GO:0002161">
    <property type="term" value="F:aminoacyl-tRNA deacylase activity"/>
    <property type="evidence" value="ECO:0007669"/>
    <property type="project" value="InterPro"/>
</dbReference>
<dbReference type="GO" id="GO:0005524">
    <property type="term" value="F:ATP binding"/>
    <property type="evidence" value="ECO:0007669"/>
    <property type="project" value="UniProtKB-UniRule"/>
</dbReference>
<dbReference type="GO" id="GO:0004823">
    <property type="term" value="F:leucine-tRNA ligase activity"/>
    <property type="evidence" value="ECO:0007669"/>
    <property type="project" value="UniProtKB-UniRule"/>
</dbReference>
<dbReference type="GO" id="GO:0006429">
    <property type="term" value="P:leucyl-tRNA aminoacylation"/>
    <property type="evidence" value="ECO:0007669"/>
    <property type="project" value="UniProtKB-UniRule"/>
</dbReference>
<dbReference type="CDD" id="cd07958">
    <property type="entry name" value="Anticodon_Ia_Leu_BEm"/>
    <property type="match status" value="1"/>
</dbReference>
<dbReference type="CDD" id="cd00812">
    <property type="entry name" value="LeuRS_core"/>
    <property type="match status" value="1"/>
</dbReference>
<dbReference type="FunFam" id="3.10.20.590:FF:000001">
    <property type="entry name" value="Leucine--tRNA ligase"/>
    <property type="match status" value="1"/>
</dbReference>
<dbReference type="FunFam" id="3.40.50.620:FF:000003">
    <property type="entry name" value="Leucine--tRNA ligase"/>
    <property type="match status" value="1"/>
</dbReference>
<dbReference type="FunFam" id="3.40.50.620:FF:000056">
    <property type="entry name" value="Leucine--tRNA ligase"/>
    <property type="match status" value="1"/>
</dbReference>
<dbReference type="FunFam" id="1.10.730.10:FF:000011">
    <property type="entry name" value="Leucine--tRNA ligase chloroplastic/mitochondrial"/>
    <property type="match status" value="1"/>
</dbReference>
<dbReference type="Gene3D" id="3.40.50.620">
    <property type="entry name" value="HUPs"/>
    <property type="match status" value="2"/>
</dbReference>
<dbReference type="Gene3D" id="1.10.730.10">
    <property type="entry name" value="Isoleucyl-tRNA Synthetase, Domain 1"/>
    <property type="match status" value="1"/>
</dbReference>
<dbReference type="HAMAP" id="MF_00049_B">
    <property type="entry name" value="Leu_tRNA_synth_B"/>
    <property type="match status" value="1"/>
</dbReference>
<dbReference type="InterPro" id="IPR001412">
    <property type="entry name" value="aa-tRNA-synth_I_CS"/>
</dbReference>
<dbReference type="InterPro" id="IPR002300">
    <property type="entry name" value="aa-tRNA-synth_Ia"/>
</dbReference>
<dbReference type="InterPro" id="IPR002302">
    <property type="entry name" value="Leu-tRNA-ligase"/>
</dbReference>
<dbReference type="InterPro" id="IPR025709">
    <property type="entry name" value="Leu_tRNA-synth_edit"/>
</dbReference>
<dbReference type="InterPro" id="IPR013155">
    <property type="entry name" value="M/V/L/I-tRNA-synth_anticd-bd"/>
</dbReference>
<dbReference type="InterPro" id="IPR014729">
    <property type="entry name" value="Rossmann-like_a/b/a_fold"/>
</dbReference>
<dbReference type="InterPro" id="IPR009080">
    <property type="entry name" value="tRNAsynth_Ia_anticodon-bd"/>
</dbReference>
<dbReference type="InterPro" id="IPR009008">
    <property type="entry name" value="Val/Leu/Ile-tRNA-synth_edit"/>
</dbReference>
<dbReference type="NCBIfam" id="TIGR00396">
    <property type="entry name" value="leuS_bact"/>
    <property type="match status" value="1"/>
</dbReference>
<dbReference type="PANTHER" id="PTHR43740:SF2">
    <property type="entry name" value="LEUCINE--TRNA LIGASE, MITOCHONDRIAL"/>
    <property type="match status" value="1"/>
</dbReference>
<dbReference type="PANTHER" id="PTHR43740">
    <property type="entry name" value="LEUCYL-TRNA SYNTHETASE"/>
    <property type="match status" value="1"/>
</dbReference>
<dbReference type="Pfam" id="PF08264">
    <property type="entry name" value="Anticodon_1"/>
    <property type="match status" value="1"/>
</dbReference>
<dbReference type="Pfam" id="PF00133">
    <property type="entry name" value="tRNA-synt_1"/>
    <property type="match status" value="2"/>
</dbReference>
<dbReference type="Pfam" id="PF13603">
    <property type="entry name" value="tRNA-synt_1_2"/>
    <property type="match status" value="1"/>
</dbReference>
<dbReference type="PRINTS" id="PR00985">
    <property type="entry name" value="TRNASYNTHLEU"/>
</dbReference>
<dbReference type="SUPFAM" id="SSF47323">
    <property type="entry name" value="Anticodon-binding domain of a subclass of class I aminoacyl-tRNA synthetases"/>
    <property type="match status" value="1"/>
</dbReference>
<dbReference type="SUPFAM" id="SSF52374">
    <property type="entry name" value="Nucleotidylyl transferase"/>
    <property type="match status" value="1"/>
</dbReference>
<dbReference type="SUPFAM" id="SSF50677">
    <property type="entry name" value="ValRS/IleRS/LeuRS editing domain"/>
    <property type="match status" value="1"/>
</dbReference>
<dbReference type="PROSITE" id="PS00178">
    <property type="entry name" value="AA_TRNA_LIGASE_I"/>
    <property type="match status" value="1"/>
</dbReference>
<keyword id="KW-0030">Aminoacyl-tRNA synthetase</keyword>
<keyword id="KW-0067">ATP-binding</keyword>
<keyword id="KW-0963">Cytoplasm</keyword>
<keyword id="KW-0436">Ligase</keyword>
<keyword id="KW-0547">Nucleotide-binding</keyword>
<keyword id="KW-0648">Protein biosynthesis</keyword>
<keyword id="KW-1185">Reference proteome</keyword>
<reference key="1">
    <citation type="journal article" date="2012" name="Environ. Microbiol.">
        <title>The genome sequence of Desulfatibacillum alkenivorans AK-01: a blueprint for anaerobic alkane oxidation.</title>
        <authorList>
            <person name="Callaghan A.V."/>
            <person name="Morris B.E."/>
            <person name="Pereira I.A."/>
            <person name="McInerney M.J."/>
            <person name="Austin R.N."/>
            <person name="Groves J.T."/>
            <person name="Kukor J.J."/>
            <person name="Suflita J.M."/>
            <person name="Young L.Y."/>
            <person name="Zylstra G.J."/>
            <person name="Wawrik B."/>
        </authorList>
    </citation>
    <scope>NUCLEOTIDE SEQUENCE [LARGE SCALE GENOMIC DNA]</scope>
    <source>
        <strain>AK-01</strain>
    </source>
</reference>
<proteinExistence type="inferred from homology"/>
<protein>
    <recommendedName>
        <fullName evidence="1">Leucine--tRNA ligase</fullName>
        <ecNumber evidence="1">6.1.1.4</ecNumber>
    </recommendedName>
    <alternativeName>
        <fullName evidence="1">Leucyl-tRNA synthetase</fullName>
        <shortName evidence="1">LeuRS</shortName>
    </alternativeName>
</protein>
<sequence length="863" mass="98398">MDERYDPKKIEGKWQAHWDAAGLFKVKEDPSKEKYFLMEMFPYPSGKIHMGHVRNYSIGDVVARFKRMQGFNVLHPMGWDAFGMPAENAAIKNNTHPAKWTYENIAAMGAQLKAMGFSYDWDREIATCKPDYYRWEQWLFVQMFKKGMVYRKEASVNWCHTCQTVLANEQVEQNMCWRCGDEVEQKKLKQWFFRITDYADDLLEHCDKLPGWPEKVVTMQKNWIGKSHGAEILFSVKDSDVKIKVFTTRPDTLCGATFMCLAPEHPLVEDLSKGTAQEAVVQEFVARMAKQDKAKRTADDKEKEGVPIGAQCINPLTGKTMEIYTANFALMEYGTGAVMSVPTHDQRDFEFATKYGLEKIVVIQPEGEALSPETMTEAYTDPGVLVNSGQFDGMKNTDAMEAIAQYLDENDMGKKTVQYRIRDWGISRQRYWGAPIPMIHCPDCGITPVPEDQLPVILPEDANLLEGGKSPLPELDSFVKTTCPQCGNENARRETDTMDTFVESSWYPERYCSPKCDDGMFDVDAVKYWMPVDQYIGGVEHAVMHLLYSRYFTRVLNDFGLVDFKEPFTRLLTQGMVCKETLKCPEHGWLFPHEVEGSGDERTCTKCGKIVEAGRVEKMSKSKLNVVDPEELLAKYGADTIRLFCLFAAPPERDLDWSEEGVEGSYRFLQRVWRMFAAHMDEVKDAQPFEGSPDDLDGYLKDLYKKTHQTIKKVTEDIDGRFHFNTAISAVMELVNMVYGLDDNLQGEKRAGVLRAAVEAVILLISPMTPHFTEELWSLFGKTQCVLETPWPAWREDALTADEVVVVLQVNGKLRSKLNVPLDTDDEKIKEMALADEKVQKFMGGKPIRKVIVVKNKLVNVVV</sequence>
<evidence type="ECO:0000255" key="1">
    <source>
        <dbReference type="HAMAP-Rule" id="MF_00049"/>
    </source>
</evidence>
<organism>
    <name type="scientific">Desulfatibacillum aliphaticivorans</name>
    <dbReference type="NCBI Taxonomy" id="218208"/>
    <lineage>
        <taxon>Bacteria</taxon>
        <taxon>Pseudomonadati</taxon>
        <taxon>Thermodesulfobacteriota</taxon>
        <taxon>Desulfobacteria</taxon>
        <taxon>Desulfobacterales</taxon>
        <taxon>Desulfatibacillaceae</taxon>
        <taxon>Desulfatibacillum</taxon>
    </lineage>
</organism>